<name>MT4C_ORYSJ</name>
<sequence>MSCGGSCNCGSCGCGGGCGKMYPDLAEKITTTTTTATTVLGVAPEKGHSEGVGKAAESGEAAHGCSCGSSCRCNPCNC</sequence>
<protein>
    <recommendedName>
        <fullName>Metallothionein-like protein 4C</fullName>
    </recommendedName>
    <alternativeName>
        <fullName>Class I metallothionein-like protein 4C</fullName>
    </alternativeName>
    <alternativeName>
        <fullName evidence="3">MT-1-4b</fullName>
    </alternativeName>
    <alternativeName>
        <fullName>OsMT-I-4c</fullName>
    </alternativeName>
    <alternativeName>
        <fullName>OsMT1c</fullName>
    </alternativeName>
</protein>
<reference key="1">
    <citation type="submission" date="2000-06" db="EMBL/GenBank/DDBJ databases">
        <title>Functional genomics of plant stress tolerance.</title>
        <authorList>
            <person name="Bohnert H.J."/>
            <person name="Borchert C."/>
            <person name="Brazille S."/>
            <person name="Brooks J."/>
            <person name="Eaton M."/>
            <person name="Ferrea H."/>
            <person name="Kawasaki S."/>
            <person name="McCollough A."/>
            <person name="Michalowski C.B."/>
            <person name="Palacio C."/>
            <person name="Scara G."/>
            <person name="Wheeler M."/>
            <person name="Zepeda G.R."/>
        </authorList>
    </citation>
    <scope>NUCLEOTIDE SEQUENCE [MRNA]</scope>
    <source>
        <strain>cv. Nipponbare</strain>
        <tissue>Root</tissue>
    </source>
</reference>
<reference key="2">
    <citation type="journal article" date="2005" name="BMC Biol.">
        <title>The sequence of rice chromosomes 11 and 12, rich in disease resistance genes and recent gene duplications.</title>
        <authorList>
            <consortium name="The rice chromosomes 11 and 12 sequencing consortia"/>
        </authorList>
    </citation>
    <scope>NUCLEOTIDE SEQUENCE [LARGE SCALE GENOMIC DNA]</scope>
    <source>
        <strain>cv. Nipponbare</strain>
    </source>
</reference>
<reference key="3">
    <citation type="journal article" date="2005" name="Nature">
        <title>The map-based sequence of the rice genome.</title>
        <authorList>
            <consortium name="International rice genome sequencing project (IRGSP)"/>
        </authorList>
    </citation>
    <scope>NUCLEOTIDE SEQUENCE [LARGE SCALE GENOMIC DNA]</scope>
    <source>
        <strain>cv. Nipponbare</strain>
    </source>
</reference>
<reference key="4">
    <citation type="journal article" date="2008" name="Nucleic Acids Res.">
        <title>The rice annotation project database (RAP-DB): 2008 update.</title>
        <authorList>
            <consortium name="The rice annotation project (RAP)"/>
        </authorList>
    </citation>
    <scope>GENOME REANNOTATION</scope>
    <source>
        <strain>cv. Nipponbare</strain>
    </source>
</reference>
<reference key="5">
    <citation type="journal article" date="2013" name="Rice">
        <title>Improvement of the Oryza sativa Nipponbare reference genome using next generation sequence and optical map data.</title>
        <authorList>
            <person name="Kawahara Y."/>
            <person name="de la Bastide M."/>
            <person name="Hamilton J.P."/>
            <person name="Kanamori H."/>
            <person name="McCombie W.R."/>
            <person name="Ouyang S."/>
            <person name="Schwartz D.C."/>
            <person name="Tanaka T."/>
            <person name="Wu J."/>
            <person name="Zhou S."/>
            <person name="Childs K.L."/>
            <person name="Davidson R.M."/>
            <person name="Lin H."/>
            <person name="Quesada-Ocampo L."/>
            <person name="Vaillancourt B."/>
            <person name="Sakai H."/>
            <person name="Lee S.S."/>
            <person name="Kim J."/>
            <person name="Numa H."/>
            <person name="Itoh T."/>
            <person name="Buell C.R."/>
            <person name="Matsumoto T."/>
        </authorList>
    </citation>
    <scope>GENOME REANNOTATION</scope>
    <source>
        <strain>cv. Nipponbare</strain>
    </source>
</reference>
<reference key="6">
    <citation type="journal article" date="2005" name="PLoS Biol.">
        <title>The genomes of Oryza sativa: a history of duplications.</title>
        <authorList>
            <person name="Yu J."/>
            <person name="Wang J."/>
            <person name="Lin W."/>
            <person name="Li S."/>
            <person name="Li H."/>
            <person name="Zhou J."/>
            <person name="Ni P."/>
            <person name="Dong W."/>
            <person name="Hu S."/>
            <person name="Zeng C."/>
            <person name="Zhang J."/>
            <person name="Zhang Y."/>
            <person name="Li R."/>
            <person name="Xu Z."/>
            <person name="Li S."/>
            <person name="Li X."/>
            <person name="Zheng H."/>
            <person name="Cong L."/>
            <person name="Lin L."/>
            <person name="Yin J."/>
            <person name="Geng J."/>
            <person name="Li G."/>
            <person name="Shi J."/>
            <person name="Liu J."/>
            <person name="Lv H."/>
            <person name="Li J."/>
            <person name="Wang J."/>
            <person name="Deng Y."/>
            <person name="Ran L."/>
            <person name="Shi X."/>
            <person name="Wang X."/>
            <person name="Wu Q."/>
            <person name="Li C."/>
            <person name="Ren X."/>
            <person name="Wang J."/>
            <person name="Wang X."/>
            <person name="Li D."/>
            <person name="Liu D."/>
            <person name="Zhang X."/>
            <person name="Ji Z."/>
            <person name="Zhao W."/>
            <person name="Sun Y."/>
            <person name="Zhang Z."/>
            <person name="Bao J."/>
            <person name="Han Y."/>
            <person name="Dong L."/>
            <person name="Ji J."/>
            <person name="Chen P."/>
            <person name="Wu S."/>
            <person name="Liu J."/>
            <person name="Xiao Y."/>
            <person name="Bu D."/>
            <person name="Tan J."/>
            <person name="Yang L."/>
            <person name="Ye C."/>
            <person name="Zhang J."/>
            <person name="Xu J."/>
            <person name="Zhou Y."/>
            <person name="Yu Y."/>
            <person name="Zhang B."/>
            <person name="Zhuang S."/>
            <person name="Wei H."/>
            <person name="Liu B."/>
            <person name="Lei M."/>
            <person name="Yu H."/>
            <person name="Li Y."/>
            <person name="Xu H."/>
            <person name="Wei S."/>
            <person name="He X."/>
            <person name="Fang L."/>
            <person name="Zhang Z."/>
            <person name="Zhang Y."/>
            <person name="Huang X."/>
            <person name="Su Z."/>
            <person name="Tong W."/>
            <person name="Li J."/>
            <person name="Tong Z."/>
            <person name="Li S."/>
            <person name="Ye J."/>
            <person name="Wang L."/>
            <person name="Fang L."/>
            <person name="Lei T."/>
            <person name="Chen C.-S."/>
            <person name="Chen H.-C."/>
            <person name="Xu Z."/>
            <person name="Li H."/>
            <person name="Huang H."/>
            <person name="Zhang F."/>
            <person name="Xu H."/>
            <person name="Li N."/>
            <person name="Zhao C."/>
            <person name="Li S."/>
            <person name="Dong L."/>
            <person name="Huang Y."/>
            <person name="Li L."/>
            <person name="Xi Y."/>
            <person name="Qi Q."/>
            <person name="Li W."/>
            <person name="Zhang B."/>
            <person name="Hu W."/>
            <person name="Zhang Y."/>
            <person name="Tian X."/>
            <person name="Jiao Y."/>
            <person name="Liang X."/>
            <person name="Jin J."/>
            <person name="Gao L."/>
            <person name="Zheng W."/>
            <person name="Hao B."/>
            <person name="Liu S.-M."/>
            <person name="Wang W."/>
            <person name="Yuan L."/>
            <person name="Cao M."/>
            <person name="McDermott J."/>
            <person name="Samudrala R."/>
            <person name="Wang J."/>
            <person name="Wong G.K.-S."/>
            <person name="Yang H."/>
        </authorList>
    </citation>
    <scope>NUCLEOTIDE SEQUENCE [LARGE SCALE GENOMIC DNA]</scope>
    <source>
        <strain>cv. Nipponbare</strain>
    </source>
</reference>
<reference key="7">
    <citation type="journal article" date="2003" name="Science">
        <title>Collection, mapping, and annotation of over 28,000 cDNA clones from japonica rice.</title>
        <authorList>
            <consortium name="The rice full-length cDNA consortium"/>
        </authorList>
    </citation>
    <scope>NUCLEOTIDE SEQUENCE [LARGE SCALE MRNA]</scope>
    <source>
        <strain>cv. Nipponbare</strain>
    </source>
</reference>
<reference key="8">
    <citation type="journal article" date="2006" name="J. Biochem. Mol. Biol.">
        <title>Molecular analyses of the metallothionein gene family in rice (Oryza sativa L.).</title>
        <authorList>
            <person name="Zhou G."/>
            <person name="Xu Y."/>
            <person name="Li J."/>
            <person name="Yang L."/>
            <person name="Liu J.-Y."/>
        </authorList>
    </citation>
    <scope>GENE FAMILY</scope>
    <scope>TISSUE SPECIFICITY</scope>
</reference>
<reference key="9">
    <citation type="journal article" date="2011" name="Plant Cell">
        <title>Rice MADS3 regulates ROS homeostasis during late anther development.</title>
        <authorList>
            <person name="Hu L."/>
            <person name="Liang W."/>
            <person name="Yin C."/>
            <person name="Cui X."/>
            <person name="Zong J."/>
            <person name="Wang X."/>
            <person name="Hu J."/>
            <person name="Zhang D."/>
        </authorList>
    </citation>
    <scope>FUNCTION</scope>
    <scope>TISSUE SPECIFICITY</scope>
    <scope>DEVELOPMENTAL STAGE</scope>
</reference>
<comment type="function">
    <text evidence="2 4">Metallothioneins have a high content of cysteine residues that bind various heavy metals (Probable). Acts as a reactive oxygen species (ROS) scavenger. Possesses superoxide anion and hydroxyl radical scavenging activities in vitro. Involved in ROS homeostasis during anther and pollen development (PubMed:21297036).</text>
</comment>
<comment type="tissue specificity">
    <text evidence="1 2">Highly expressed in roots (PubMed:21297036). Expressed in leaves, rachis, inflorescences and seeds (PubMed:17002881).</text>
</comment>
<comment type="developmental stage">
    <text evidence="2">During anther development, expressed from stage 8 to stage 12.</text>
</comment>
<comment type="miscellaneous">
    <text evidence="2">Plants silencing MT4C show decreased pollen fertility and increased level of superoxide anion.</text>
</comment>
<comment type="similarity">
    <text evidence="4">Belongs to the metallothionein superfamily. Type 15 family.</text>
</comment>
<feature type="chain" id="PRO_0000263061" description="Metallothionein-like protein 4C">
    <location>
        <begin position="1"/>
        <end position="78"/>
    </location>
</feature>
<gene>
    <name type="primary">MT4C</name>
    <name type="ordered locus">Os12g0571100</name>
    <name type="ordered locus">LOC_Os12g38300</name>
    <name evidence="5" type="ORF">OsJ_36585</name>
</gene>
<accession>Q2QNC3</accession>
<accession>B7EXP4</accession>
<evidence type="ECO:0000269" key="1">
    <source>
    </source>
</evidence>
<evidence type="ECO:0000269" key="2">
    <source>
    </source>
</evidence>
<evidence type="ECO:0000303" key="3">
    <source>
    </source>
</evidence>
<evidence type="ECO:0000305" key="4"/>
<evidence type="ECO:0000312" key="5">
    <source>
        <dbReference type="EMBL" id="EEE53461.1"/>
    </source>
</evidence>
<proteinExistence type="evidence at transcript level"/>
<dbReference type="EMBL" id="BE039221">
    <property type="status" value="NOT_ANNOTATED_CDS"/>
    <property type="molecule type" value="mRNA"/>
</dbReference>
<dbReference type="EMBL" id="DP000011">
    <property type="protein sequence ID" value="ABA99661.1"/>
    <property type="molecule type" value="Genomic_DNA"/>
</dbReference>
<dbReference type="EMBL" id="AP008218">
    <property type="protein sequence ID" value="BAF30102.1"/>
    <property type="molecule type" value="Genomic_DNA"/>
</dbReference>
<dbReference type="EMBL" id="AP014968">
    <property type="protein sequence ID" value="BAT17739.1"/>
    <property type="molecule type" value="Genomic_DNA"/>
</dbReference>
<dbReference type="EMBL" id="CM000149">
    <property type="protein sequence ID" value="EEE53461.1"/>
    <property type="molecule type" value="Genomic_DNA"/>
</dbReference>
<dbReference type="EMBL" id="AK105219">
    <property type="protein sequence ID" value="BAG97141.1"/>
    <property type="molecule type" value="mRNA"/>
</dbReference>
<dbReference type="RefSeq" id="XP_015620236.1">
    <property type="nucleotide sequence ID" value="XM_015764750.1"/>
</dbReference>
<dbReference type="FunCoup" id="Q2QNC3">
    <property type="interactions" value="73"/>
</dbReference>
<dbReference type="STRING" id="39947.Q2QNC3"/>
<dbReference type="PaxDb" id="39947-Q2QNC3"/>
<dbReference type="EnsemblPlants" id="Os12t0571100-01">
    <property type="protein sequence ID" value="Os12t0571100-01"/>
    <property type="gene ID" value="Os12g0571100"/>
</dbReference>
<dbReference type="Gramene" id="Os12t0571100-01">
    <property type="protein sequence ID" value="Os12t0571100-01"/>
    <property type="gene ID" value="Os12g0571100"/>
</dbReference>
<dbReference type="KEGG" id="dosa:Os12g0571100"/>
<dbReference type="eggNOG" id="KOG4738">
    <property type="taxonomic scope" value="Eukaryota"/>
</dbReference>
<dbReference type="HOGENOM" id="CLU_161105_1_0_1"/>
<dbReference type="InParanoid" id="Q2QNC3"/>
<dbReference type="OMA" id="YHEVSEM"/>
<dbReference type="OrthoDB" id="678987at2759"/>
<dbReference type="Proteomes" id="UP000000763">
    <property type="component" value="Chromosome 12"/>
</dbReference>
<dbReference type="Proteomes" id="UP000007752">
    <property type="component" value="Chromosome 12"/>
</dbReference>
<dbReference type="Proteomes" id="UP000059680">
    <property type="component" value="Chromosome 12"/>
</dbReference>
<dbReference type="GO" id="GO:0046872">
    <property type="term" value="F:metal ion binding"/>
    <property type="evidence" value="ECO:0007669"/>
    <property type="project" value="UniProtKB-KW"/>
</dbReference>
<dbReference type="GO" id="GO:0009555">
    <property type="term" value="P:pollen development"/>
    <property type="evidence" value="ECO:0000315"/>
    <property type="project" value="UniProtKB"/>
</dbReference>
<dbReference type="GO" id="GO:0072593">
    <property type="term" value="P:reactive oxygen species metabolic process"/>
    <property type="evidence" value="ECO:0000315"/>
    <property type="project" value="UniProtKB"/>
</dbReference>
<dbReference type="InterPro" id="IPR000347">
    <property type="entry name" value="Metalthion_15p"/>
</dbReference>
<dbReference type="PANTHER" id="PTHR33543">
    <property type="entry name" value="METALLOTHIONEIN-LIKE PROTEIN 2A"/>
    <property type="match status" value="1"/>
</dbReference>
<dbReference type="PANTHER" id="PTHR33543:SF37">
    <property type="entry name" value="METALLOTHIONEIN-LIKE PROTEIN 4B"/>
    <property type="match status" value="1"/>
</dbReference>
<dbReference type="Pfam" id="PF01439">
    <property type="entry name" value="Metallothio_2"/>
    <property type="match status" value="1"/>
</dbReference>
<keyword id="KW-0479">Metal-binding</keyword>
<keyword id="KW-0480">Metal-thiolate cluster</keyword>
<keyword id="KW-1185">Reference proteome</keyword>
<keyword id="KW-0346">Stress response</keyword>
<organism>
    <name type="scientific">Oryza sativa subsp. japonica</name>
    <name type="common">Rice</name>
    <dbReference type="NCBI Taxonomy" id="39947"/>
    <lineage>
        <taxon>Eukaryota</taxon>
        <taxon>Viridiplantae</taxon>
        <taxon>Streptophyta</taxon>
        <taxon>Embryophyta</taxon>
        <taxon>Tracheophyta</taxon>
        <taxon>Spermatophyta</taxon>
        <taxon>Magnoliopsida</taxon>
        <taxon>Liliopsida</taxon>
        <taxon>Poales</taxon>
        <taxon>Poaceae</taxon>
        <taxon>BOP clade</taxon>
        <taxon>Oryzoideae</taxon>
        <taxon>Oryzeae</taxon>
        <taxon>Oryzinae</taxon>
        <taxon>Oryza</taxon>
        <taxon>Oryza sativa</taxon>
    </lineage>
</organism>